<feature type="chain" id="PRO_0000157856" description="Probable glutathione-independent glyoxalase hsp3104">
    <location>
        <begin position="1"/>
        <end position="222"/>
    </location>
</feature>
<feature type="active site" evidence="2">
    <location>
        <position position="124"/>
    </location>
</feature>
<feature type="active site" evidence="2">
    <location>
        <position position="125"/>
    </location>
</feature>
<feature type="active site" evidence="2">
    <location>
        <position position="155"/>
    </location>
</feature>
<gene>
    <name evidence="4" type="primary">hsp3104</name>
    <name evidence="6" type="ORF">SPAC11D3.13</name>
</gene>
<reference key="1">
    <citation type="journal article" date="2002" name="Nature">
        <title>The genome sequence of Schizosaccharomyces pombe.</title>
        <authorList>
            <person name="Wood V."/>
            <person name="Gwilliam R."/>
            <person name="Rajandream M.A."/>
            <person name="Lyne M.H."/>
            <person name="Lyne R."/>
            <person name="Stewart A."/>
            <person name="Sgouros J.G."/>
            <person name="Peat N."/>
            <person name="Hayles J."/>
            <person name="Baker S.G."/>
            <person name="Basham D."/>
            <person name="Bowman S."/>
            <person name="Brooks K."/>
            <person name="Brown D."/>
            <person name="Brown S."/>
            <person name="Chillingworth T."/>
            <person name="Churcher C.M."/>
            <person name="Collins M."/>
            <person name="Connor R."/>
            <person name="Cronin A."/>
            <person name="Davis P."/>
            <person name="Feltwell T."/>
            <person name="Fraser A."/>
            <person name="Gentles S."/>
            <person name="Goble A."/>
            <person name="Hamlin N."/>
            <person name="Harris D.E."/>
            <person name="Hidalgo J."/>
            <person name="Hodgson G."/>
            <person name="Holroyd S."/>
            <person name="Hornsby T."/>
            <person name="Howarth S."/>
            <person name="Huckle E.J."/>
            <person name="Hunt S."/>
            <person name="Jagels K."/>
            <person name="James K.D."/>
            <person name="Jones L."/>
            <person name="Jones M."/>
            <person name="Leather S."/>
            <person name="McDonald S."/>
            <person name="McLean J."/>
            <person name="Mooney P."/>
            <person name="Moule S."/>
            <person name="Mungall K.L."/>
            <person name="Murphy L.D."/>
            <person name="Niblett D."/>
            <person name="Odell C."/>
            <person name="Oliver K."/>
            <person name="O'Neil S."/>
            <person name="Pearson D."/>
            <person name="Quail M.A."/>
            <person name="Rabbinowitsch E."/>
            <person name="Rutherford K.M."/>
            <person name="Rutter S."/>
            <person name="Saunders D."/>
            <person name="Seeger K."/>
            <person name="Sharp S."/>
            <person name="Skelton J."/>
            <person name="Simmonds M.N."/>
            <person name="Squares R."/>
            <person name="Squares S."/>
            <person name="Stevens K."/>
            <person name="Taylor K."/>
            <person name="Taylor R.G."/>
            <person name="Tivey A."/>
            <person name="Walsh S.V."/>
            <person name="Warren T."/>
            <person name="Whitehead S."/>
            <person name="Woodward J.R."/>
            <person name="Volckaert G."/>
            <person name="Aert R."/>
            <person name="Robben J."/>
            <person name="Grymonprez B."/>
            <person name="Weltjens I."/>
            <person name="Vanstreels E."/>
            <person name="Rieger M."/>
            <person name="Schaefer M."/>
            <person name="Mueller-Auer S."/>
            <person name="Gabel C."/>
            <person name="Fuchs M."/>
            <person name="Duesterhoeft A."/>
            <person name="Fritzc C."/>
            <person name="Holzer E."/>
            <person name="Moestl D."/>
            <person name="Hilbert H."/>
            <person name="Borzym K."/>
            <person name="Langer I."/>
            <person name="Beck A."/>
            <person name="Lehrach H."/>
            <person name="Reinhardt R."/>
            <person name="Pohl T.M."/>
            <person name="Eger P."/>
            <person name="Zimmermann W."/>
            <person name="Wedler H."/>
            <person name="Wambutt R."/>
            <person name="Purnelle B."/>
            <person name="Goffeau A."/>
            <person name="Cadieu E."/>
            <person name="Dreano S."/>
            <person name="Gloux S."/>
            <person name="Lelaure V."/>
            <person name="Mottier S."/>
            <person name="Galibert F."/>
            <person name="Aves S.J."/>
            <person name="Xiang Z."/>
            <person name="Hunt C."/>
            <person name="Moore K."/>
            <person name="Hurst S.M."/>
            <person name="Lucas M."/>
            <person name="Rochet M."/>
            <person name="Gaillardin C."/>
            <person name="Tallada V.A."/>
            <person name="Garzon A."/>
            <person name="Thode G."/>
            <person name="Daga R.R."/>
            <person name="Cruzado L."/>
            <person name="Jimenez J."/>
            <person name="Sanchez M."/>
            <person name="del Rey F."/>
            <person name="Benito J."/>
            <person name="Dominguez A."/>
            <person name="Revuelta J.L."/>
            <person name="Moreno S."/>
            <person name="Armstrong J."/>
            <person name="Forsburg S.L."/>
            <person name="Cerutti L."/>
            <person name="Lowe T."/>
            <person name="McCombie W.R."/>
            <person name="Paulsen I."/>
            <person name="Potashkin J."/>
            <person name="Shpakovski G.V."/>
            <person name="Ussery D."/>
            <person name="Barrell B.G."/>
            <person name="Nurse P."/>
        </authorList>
    </citation>
    <scope>NUCLEOTIDE SEQUENCE [LARGE SCALE GENOMIC DNA]</scope>
    <source>
        <strain>972 / ATCC 24843</strain>
    </source>
</reference>
<reference key="2">
    <citation type="journal article" date="2006" name="Nat. Biotechnol.">
        <title>ORFeome cloning and global analysis of protein localization in the fission yeast Schizosaccharomyces pombe.</title>
        <authorList>
            <person name="Matsuyama A."/>
            <person name="Arai R."/>
            <person name="Yashiroda Y."/>
            <person name="Shirai A."/>
            <person name="Kamata A."/>
            <person name="Sekido S."/>
            <person name="Kobayashi Y."/>
            <person name="Hashimoto A."/>
            <person name="Hamamoto M."/>
            <person name="Hiraoka Y."/>
            <person name="Horinouchi S."/>
            <person name="Yoshida M."/>
        </authorList>
    </citation>
    <scope>SUBCELLULAR LOCATION [LARGE SCALE ANALYSIS]</scope>
</reference>
<reference key="3">
    <citation type="journal article" date="2014" name="BMC Evol. Biol.">
        <title>Identification of glutathione (GSH)-independent glyoxalase III from Schizosaccharomyces pombe.</title>
        <authorList>
            <person name="Zhao Q."/>
            <person name="Su Y."/>
            <person name="Wang Z."/>
            <person name="Chen C."/>
            <person name="Wu T."/>
            <person name="Huang Y."/>
        </authorList>
    </citation>
    <scope>GENE NAME</scope>
</reference>
<evidence type="ECO:0000250" key="1">
    <source>
        <dbReference type="UniProtKB" id="O74914"/>
    </source>
</evidence>
<evidence type="ECO:0000250" key="2">
    <source>
        <dbReference type="UniProtKB" id="Q04432"/>
    </source>
</evidence>
<evidence type="ECO:0000269" key="3">
    <source>
    </source>
</evidence>
<evidence type="ECO:0000303" key="4">
    <source>
    </source>
</evidence>
<evidence type="ECO:0000305" key="5"/>
<evidence type="ECO:0000312" key="6">
    <source>
        <dbReference type="PomBase" id="SPAC11D3.13"/>
    </source>
</evidence>
<proteinExistence type="inferred from homology"/>
<comment type="function">
    <text evidence="1 2">Catalyzes the conversion of methylglyoxal (MG) to D-lactate in a single glutathione (GSH)-independent step. May play a role in detoxifying endogenously produced glyoxals. Involved in protection against reactive oxygen species (ROS).</text>
</comment>
<comment type="catalytic activity">
    <reaction evidence="1">
        <text>methylglyoxal + H2O = (R)-lactate + H(+)</text>
        <dbReference type="Rhea" id="RHEA:27754"/>
        <dbReference type="ChEBI" id="CHEBI:15377"/>
        <dbReference type="ChEBI" id="CHEBI:15378"/>
        <dbReference type="ChEBI" id="CHEBI:16004"/>
        <dbReference type="ChEBI" id="CHEBI:17158"/>
        <dbReference type="EC" id="4.2.1.130"/>
    </reaction>
</comment>
<comment type="subcellular location">
    <subcellularLocation>
        <location evidence="3">Cytoplasm</location>
    </subcellularLocation>
</comment>
<comment type="similarity">
    <text evidence="5">Belongs to the peptidase C56 family. HSP31-like subfamily.</text>
</comment>
<sequence>MVLFMKTVQRPEHISLKSCIPFKSLQRQGIVFRLSVRMVMLADDHSISDSALSDSDKNAFKDKNNDFWKAIKNAKNASDINFSDYSIFFAAGGHGTLFDFPSATNLHKGAAKIYSMGGVIAAVCHGPVILPCIKDSTGFSIVKGKTVTAFNEIAEQQMNLMPTFEKYHFKTLNKLFQEAGSNFVDPQEPFDDFVKTDGKLVTGANPASAASTAKAALNSLNS</sequence>
<name>HSP34_SCHPO</name>
<accession>Q10092</accession>
<organism>
    <name type="scientific">Schizosaccharomyces pombe (strain 972 / ATCC 24843)</name>
    <name type="common">Fission yeast</name>
    <dbReference type="NCBI Taxonomy" id="284812"/>
    <lineage>
        <taxon>Eukaryota</taxon>
        <taxon>Fungi</taxon>
        <taxon>Dikarya</taxon>
        <taxon>Ascomycota</taxon>
        <taxon>Taphrinomycotina</taxon>
        <taxon>Schizosaccharomycetes</taxon>
        <taxon>Schizosaccharomycetales</taxon>
        <taxon>Schizosaccharomycetaceae</taxon>
        <taxon>Schizosaccharomyces</taxon>
    </lineage>
</organism>
<protein>
    <recommendedName>
        <fullName evidence="1">Probable glutathione-independent glyoxalase hsp3104</fullName>
        <ecNumber evidence="1">4.2.1.130</ecNumber>
    </recommendedName>
    <alternativeName>
        <fullName evidence="1">Glyoxalase 3 homolog 4</fullName>
    </alternativeName>
    <alternativeName>
        <fullName evidence="1">Heat shock protein 31 homolog 4</fullName>
    </alternativeName>
</protein>
<keyword id="KW-0963">Cytoplasm</keyword>
<keyword id="KW-0456">Lyase</keyword>
<keyword id="KW-1185">Reference proteome</keyword>
<keyword id="KW-0346">Stress response</keyword>
<dbReference type="EC" id="4.2.1.130" evidence="1"/>
<dbReference type="EMBL" id="CU329670">
    <property type="protein sequence ID" value="CAA92314.1"/>
    <property type="molecule type" value="Genomic_DNA"/>
</dbReference>
<dbReference type="PIR" id="T37522">
    <property type="entry name" value="T37522"/>
</dbReference>
<dbReference type="RefSeq" id="NP_592808.1">
    <property type="nucleotide sequence ID" value="NM_001018208.2"/>
</dbReference>
<dbReference type="SMR" id="Q10092"/>
<dbReference type="FunCoup" id="Q10092">
    <property type="interactions" value="443"/>
</dbReference>
<dbReference type="STRING" id="284812.Q10092"/>
<dbReference type="PaxDb" id="4896-SPAC11D3.13.1"/>
<dbReference type="EnsemblFungi" id="SPAC11D3.13.1">
    <property type="protein sequence ID" value="SPAC11D3.13.1:pep"/>
    <property type="gene ID" value="SPAC11D3.13"/>
</dbReference>
<dbReference type="GeneID" id="2542927"/>
<dbReference type="KEGG" id="spo:2542927"/>
<dbReference type="PomBase" id="SPAC11D3.13">
    <property type="gene designation" value="hsp3104"/>
</dbReference>
<dbReference type="VEuPathDB" id="FungiDB:SPAC11D3.13"/>
<dbReference type="eggNOG" id="ENOG502RZ3Y">
    <property type="taxonomic scope" value="Eukaryota"/>
</dbReference>
<dbReference type="HOGENOM" id="CLU_070319_1_0_1"/>
<dbReference type="InParanoid" id="Q10092"/>
<dbReference type="OMA" id="TYTPDWL"/>
<dbReference type="PhylomeDB" id="Q10092"/>
<dbReference type="PRO" id="PR:Q10092"/>
<dbReference type="Proteomes" id="UP000002485">
    <property type="component" value="Chromosome I"/>
</dbReference>
<dbReference type="GO" id="GO:0005737">
    <property type="term" value="C:cytoplasm"/>
    <property type="evidence" value="ECO:0007005"/>
    <property type="project" value="PomBase"/>
</dbReference>
<dbReference type="GO" id="GO:0005829">
    <property type="term" value="C:cytosol"/>
    <property type="evidence" value="ECO:0007005"/>
    <property type="project" value="PomBase"/>
</dbReference>
<dbReference type="GO" id="GO:0019172">
    <property type="term" value="F:glyoxalase III activity"/>
    <property type="evidence" value="ECO:0000318"/>
    <property type="project" value="GO_Central"/>
</dbReference>
<dbReference type="GO" id="GO:1990748">
    <property type="term" value="P:cellular detoxification"/>
    <property type="evidence" value="ECO:0000305"/>
    <property type="project" value="PomBase"/>
</dbReference>
<dbReference type="GO" id="GO:0019243">
    <property type="term" value="P:methylglyoxal catabolic process to D-lactate via S-lactoyl-glutathione"/>
    <property type="evidence" value="ECO:0000318"/>
    <property type="project" value="GO_Central"/>
</dbReference>
<dbReference type="Gene3D" id="3.40.50.880">
    <property type="match status" value="1"/>
</dbReference>
<dbReference type="InterPro" id="IPR029062">
    <property type="entry name" value="Class_I_gatase-like"/>
</dbReference>
<dbReference type="InterPro" id="IPR002818">
    <property type="entry name" value="DJ-1/PfpI"/>
</dbReference>
<dbReference type="InterPro" id="IPR050325">
    <property type="entry name" value="Prot/Nucl_acid_deglycase"/>
</dbReference>
<dbReference type="PANTHER" id="PTHR48094:SF24">
    <property type="entry name" value="GLUTATHIONE-INDEPENDENT GLYOXALASE HSP3101-RELATED"/>
    <property type="match status" value="1"/>
</dbReference>
<dbReference type="PANTHER" id="PTHR48094">
    <property type="entry name" value="PROTEIN/NUCLEIC ACID DEGLYCASE DJ-1-RELATED"/>
    <property type="match status" value="1"/>
</dbReference>
<dbReference type="Pfam" id="PF01965">
    <property type="entry name" value="DJ-1_PfpI"/>
    <property type="match status" value="1"/>
</dbReference>
<dbReference type="SUPFAM" id="SSF52317">
    <property type="entry name" value="Class I glutamine amidotransferase-like"/>
    <property type="match status" value="1"/>
</dbReference>